<name>DAPA_BDEBA</name>
<protein>
    <recommendedName>
        <fullName evidence="1">4-hydroxy-tetrahydrodipicolinate synthase</fullName>
        <shortName evidence="1">HTPA synthase</shortName>
        <ecNumber evidence="1">4.3.3.7</ecNumber>
    </recommendedName>
</protein>
<comment type="function">
    <text evidence="1">Catalyzes the condensation of (S)-aspartate-beta-semialdehyde [(S)-ASA] and pyruvate to 4-hydroxy-tetrahydrodipicolinate (HTPA).</text>
</comment>
<comment type="catalytic activity">
    <reaction evidence="1">
        <text>L-aspartate 4-semialdehyde + pyruvate = (2S,4S)-4-hydroxy-2,3,4,5-tetrahydrodipicolinate + H2O + H(+)</text>
        <dbReference type="Rhea" id="RHEA:34171"/>
        <dbReference type="ChEBI" id="CHEBI:15361"/>
        <dbReference type="ChEBI" id="CHEBI:15377"/>
        <dbReference type="ChEBI" id="CHEBI:15378"/>
        <dbReference type="ChEBI" id="CHEBI:67139"/>
        <dbReference type="ChEBI" id="CHEBI:537519"/>
        <dbReference type="EC" id="4.3.3.7"/>
    </reaction>
</comment>
<comment type="pathway">
    <text evidence="1">Amino-acid biosynthesis; L-lysine biosynthesis via DAP pathway; (S)-tetrahydrodipicolinate from L-aspartate: step 3/4.</text>
</comment>
<comment type="subunit">
    <text evidence="1">Homotetramer; dimer of dimers.</text>
</comment>
<comment type="subcellular location">
    <subcellularLocation>
        <location evidence="1">Cytoplasm</location>
    </subcellularLocation>
</comment>
<comment type="similarity">
    <text evidence="1">Belongs to the DapA family.</text>
</comment>
<comment type="caution">
    <text evidence="2">Was originally thought to be a dihydrodipicolinate synthase (DHDPS), catalyzing the condensation of (S)-aspartate-beta-semialdehyde [(S)-ASA] and pyruvate to dihydrodipicolinate (DHDP). However, it was shown in E.coli that the product of the enzymatic reaction is not dihydrodipicolinate but in fact (4S)-4-hydroxy-2,3,4,5-tetrahydro-(2S)-dipicolinic acid (HTPA), and that the consecutive dehydration reaction leading to DHDP is not spontaneous but catalyzed by DapB.</text>
</comment>
<keyword id="KW-0028">Amino-acid biosynthesis</keyword>
<keyword id="KW-0963">Cytoplasm</keyword>
<keyword id="KW-0220">Diaminopimelate biosynthesis</keyword>
<keyword id="KW-0456">Lyase</keyword>
<keyword id="KW-0457">Lysine biosynthesis</keyword>
<keyword id="KW-1185">Reference proteome</keyword>
<keyword id="KW-0704">Schiff base</keyword>
<evidence type="ECO:0000255" key="1">
    <source>
        <dbReference type="HAMAP-Rule" id="MF_00418"/>
    </source>
</evidence>
<evidence type="ECO:0000305" key="2"/>
<feature type="chain" id="PRO_1000080524" description="4-hydroxy-tetrahydrodipicolinate synthase">
    <location>
        <begin position="1"/>
        <end position="293"/>
    </location>
</feature>
<feature type="active site" description="Proton donor/acceptor" evidence="1">
    <location>
        <position position="134"/>
    </location>
</feature>
<feature type="active site" description="Schiff-base intermediate with substrate" evidence="1">
    <location>
        <position position="162"/>
    </location>
</feature>
<feature type="binding site" evidence="1">
    <location>
        <position position="46"/>
    </location>
    <ligand>
        <name>pyruvate</name>
        <dbReference type="ChEBI" id="CHEBI:15361"/>
    </ligand>
</feature>
<feature type="binding site" evidence="1">
    <location>
        <position position="204"/>
    </location>
    <ligand>
        <name>pyruvate</name>
        <dbReference type="ChEBI" id="CHEBI:15361"/>
    </ligand>
</feature>
<feature type="site" description="Part of a proton relay during catalysis" evidence="1">
    <location>
        <position position="45"/>
    </location>
</feature>
<feature type="site" description="Part of a proton relay during catalysis" evidence="1">
    <location>
        <position position="108"/>
    </location>
</feature>
<gene>
    <name evidence="1" type="primary">dapA</name>
    <name type="ordered locus">Bd0046</name>
</gene>
<accession>Q6MRM9</accession>
<proteinExistence type="inferred from homology"/>
<reference key="1">
    <citation type="journal article" date="2004" name="Science">
        <title>A predator unmasked: life cycle of Bdellovibrio bacteriovorus from a genomic perspective.</title>
        <authorList>
            <person name="Rendulic S."/>
            <person name="Jagtap P."/>
            <person name="Rosinus A."/>
            <person name="Eppinger M."/>
            <person name="Baar C."/>
            <person name="Lanz C."/>
            <person name="Keller H."/>
            <person name="Lambert C."/>
            <person name="Evans K.J."/>
            <person name="Goesmann A."/>
            <person name="Meyer F."/>
            <person name="Sockett R.E."/>
            <person name="Schuster S.C."/>
        </authorList>
    </citation>
    <scope>NUCLEOTIDE SEQUENCE [LARGE SCALE GENOMIC DNA]</scope>
    <source>
        <strain>ATCC 15356 / DSM 50701 / NCIMB 9529 / HD100</strain>
    </source>
</reference>
<dbReference type="EC" id="4.3.3.7" evidence="1"/>
<dbReference type="EMBL" id="BX842646">
    <property type="protein sequence ID" value="CAE77728.1"/>
    <property type="molecule type" value="Genomic_DNA"/>
</dbReference>
<dbReference type="RefSeq" id="WP_011162669.1">
    <property type="nucleotide sequence ID" value="NC_005363.1"/>
</dbReference>
<dbReference type="SMR" id="Q6MRM9"/>
<dbReference type="STRING" id="264462.Bd0046"/>
<dbReference type="GeneID" id="93011199"/>
<dbReference type="KEGG" id="bba:Bd0046"/>
<dbReference type="eggNOG" id="COG0329">
    <property type="taxonomic scope" value="Bacteria"/>
</dbReference>
<dbReference type="HOGENOM" id="CLU_049343_7_1_7"/>
<dbReference type="UniPathway" id="UPA00034">
    <property type="reaction ID" value="UER00017"/>
</dbReference>
<dbReference type="Proteomes" id="UP000008080">
    <property type="component" value="Chromosome"/>
</dbReference>
<dbReference type="GO" id="GO:0005737">
    <property type="term" value="C:cytoplasm"/>
    <property type="evidence" value="ECO:0007669"/>
    <property type="project" value="UniProtKB-SubCell"/>
</dbReference>
<dbReference type="GO" id="GO:0008840">
    <property type="term" value="F:4-hydroxy-tetrahydrodipicolinate synthase activity"/>
    <property type="evidence" value="ECO:0007669"/>
    <property type="project" value="UniProtKB-UniRule"/>
</dbReference>
<dbReference type="GO" id="GO:0019877">
    <property type="term" value="P:diaminopimelate biosynthetic process"/>
    <property type="evidence" value="ECO:0007669"/>
    <property type="project" value="UniProtKB-UniRule"/>
</dbReference>
<dbReference type="GO" id="GO:0009089">
    <property type="term" value="P:lysine biosynthetic process via diaminopimelate"/>
    <property type="evidence" value="ECO:0007669"/>
    <property type="project" value="UniProtKB-UniRule"/>
</dbReference>
<dbReference type="CDD" id="cd00950">
    <property type="entry name" value="DHDPS"/>
    <property type="match status" value="1"/>
</dbReference>
<dbReference type="Gene3D" id="3.20.20.70">
    <property type="entry name" value="Aldolase class I"/>
    <property type="match status" value="1"/>
</dbReference>
<dbReference type="HAMAP" id="MF_00418">
    <property type="entry name" value="DapA"/>
    <property type="match status" value="1"/>
</dbReference>
<dbReference type="InterPro" id="IPR013785">
    <property type="entry name" value="Aldolase_TIM"/>
</dbReference>
<dbReference type="InterPro" id="IPR005263">
    <property type="entry name" value="DapA"/>
</dbReference>
<dbReference type="InterPro" id="IPR002220">
    <property type="entry name" value="DapA-like"/>
</dbReference>
<dbReference type="InterPro" id="IPR020625">
    <property type="entry name" value="Schiff_base-form_aldolases_AS"/>
</dbReference>
<dbReference type="NCBIfam" id="TIGR00674">
    <property type="entry name" value="dapA"/>
    <property type="match status" value="1"/>
</dbReference>
<dbReference type="PANTHER" id="PTHR12128:SF66">
    <property type="entry name" value="4-HYDROXY-2-OXOGLUTARATE ALDOLASE, MITOCHONDRIAL"/>
    <property type="match status" value="1"/>
</dbReference>
<dbReference type="PANTHER" id="PTHR12128">
    <property type="entry name" value="DIHYDRODIPICOLINATE SYNTHASE"/>
    <property type="match status" value="1"/>
</dbReference>
<dbReference type="Pfam" id="PF00701">
    <property type="entry name" value="DHDPS"/>
    <property type="match status" value="1"/>
</dbReference>
<dbReference type="PIRSF" id="PIRSF001365">
    <property type="entry name" value="DHDPS"/>
    <property type="match status" value="1"/>
</dbReference>
<dbReference type="PRINTS" id="PR00146">
    <property type="entry name" value="DHPICSNTHASE"/>
</dbReference>
<dbReference type="SMART" id="SM01130">
    <property type="entry name" value="DHDPS"/>
    <property type="match status" value="1"/>
</dbReference>
<dbReference type="SUPFAM" id="SSF51569">
    <property type="entry name" value="Aldolase"/>
    <property type="match status" value="1"/>
</dbReference>
<dbReference type="PROSITE" id="PS00666">
    <property type="entry name" value="DHDPS_2"/>
    <property type="match status" value="1"/>
</dbReference>
<sequence>MKNFKGTFTALVTPFKNGKIDFASLDKLLKQQLAGGVDGFVVNGTTGESPVLTSSEKAELFKHIRNVCGDKVVLIMGTGSNNTAQTIEDSRKAEEMGADAILVVVPYYNKPPQRGLYEHFKAVASSVKIPTILYNVPGRTITSLETGTIRDLAKVKGVVGIKEATGKIDLASEIIKACGSEFVMLSGDDGTYVEFLGVGGHGVISVASHVIPAQMVQWKKWVSEGALDKARADIAKYNDLINLLFVEANPIPVKKALQLMGILESAELRLPLVELGAENTAKLQAEMKKVGVL</sequence>
<organism>
    <name type="scientific">Bdellovibrio bacteriovorus (strain ATCC 15356 / DSM 50701 / NCIMB 9529 / HD100)</name>
    <dbReference type="NCBI Taxonomy" id="264462"/>
    <lineage>
        <taxon>Bacteria</taxon>
        <taxon>Pseudomonadati</taxon>
        <taxon>Bdellovibrionota</taxon>
        <taxon>Bdellovibrionia</taxon>
        <taxon>Bdellovibrionales</taxon>
        <taxon>Pseudobdellovibrionaceae</taxon>
        <taxon>Bdellovibrio</taxon>
    </lineage>
</organism>